<keyword id="KW-0678">Repressor</keyword>
<keyword id="KW-0687">Ribonucleoprotein</keyword>
<keyword id="KW-0689">Ribosomal protein</keyword>
<keyword id="KW-0694">RNA-binding</keyword>
<keyword id="KW-0699">rRNA-binding</keyword>
<keyword id="KW-0810">Translation regulation</keyword>
<keyword id="KW-0820">tRNA-binding</keyword>
<protein>
    <recommendedName>
        <fullName evidence="1">Large ribosomal subunit protein uL1</fullName>
    </recommendedName>
    <alternativeName>
        <fullName evidence="2">50S ribosomal protein L1</fullName>
    </alternativeName>
</protein>
<dbReference type="EMBL" id="CR628336">
    <property type="protein sequence ID" value="CAH11532.1"/>
    <property type="molecule type" value="Genomic_DNA"/>
</dbReference>
<dbReference type="RefSeq" id="WP_010946070.1">
    <property type="nucleotide sequence ID" value="NC_006368.1"/>
</dbReference>
<dbReference type="SMR" id="Q5X869"/>
<dbReference type="GeneID" id="57034322"/>
<dbReference type="KEGG" id="lpp:lpp0384"/>
<dbReference type="LegioList" id="lpp0384"/>
<dbReference type="HOGENOM" id="CLU_062853_0_0_6"/>
<dbReference type="GO" id="GO:0022625">
    <property type="term" value="C:cytosolic large ribosomal subunit"/>
    <property type="evidence" value="ECO:0007669"/>
    <property type="project" value="TreeGrafter"/>
</dbReference>
<dbReference type="GO" id="GO:0019843">
    <property type="term" value="F:rRNA binding"/>
    <property type="evidence" value="ECO:0007669"/>
    <property type="project" value="UniProtKB-UniRule"/>
</dbReference>
<dbReference type="GO" id="GO:0003735">
    <property type="term" value="F:structural constituent of ribosome"/>
    <property type="evidence" value="ECO:0007669"/>
    <property type="project" value="InterPro"/>
</dbReference>
<dbReference type="GO" id="GO:0000049">
    <property type="term" value="F:tRNA binding"/>
    <property type="evidence" value="ECO:0007669"/>
    <property type="project" value="UniProtKB-KW"/>
</dbReference>
<dbReference type="GO" id="GO:0006417">
    <property type="term" value="P:regulation of translation"/>
    <property type="evidence" value="ECO:0007669"/>
    <property type="project" value="UniProtKB-KW"/>
</dbReference>
<dbReference type="GO" id="GO:0006412">
    <property type="term" value="P:translation"/>
    <property type="evidence" value="ECO:0007669"/>
    <property type="project" value="UniProtKB-UniRule"/>
</dbReference>
<dbReference type="CDD" id="cd00403">
    <property type="entry name" value="Ribosomal_L1"/>
    <property type="match status" value="1"/>
</dbReference>
<dbReference type="FunFam" id="3.40.50.790:FF:000001">
    <property type="entry name" value="50S ribosomal protein L1"/>
    <property type="match status" value="1"/>
</dbReference>
<dbReference type="Gene3D" id="3.30.190.20">
    <property type="match status" value="1"/>
</dbReference>
<dbReference type="Gene3D" id="3.40.50.790">
    <property type="match status" value="1"/>
</dbReference>
<dbReference type="HAMAP" id="MF_01318_B">
    <property type="entry name" value="Ribosomal_uL1_B"/>
    <property type="match status" value="1"/>
</dbReference>
<dbReference type="InterPro" id="IPR005878">
    <property type="entry name" value="Ribosom_uL1_bac-type"/>
</dbReference>
<dbReference type="InterPro" id="IPR002143">
    <property type="entry name" value="Ribosomal_uL1"/>
</dbReference>
<dbReference type="InterPro" id="IPR023674">
    <property type="entry name" value="Ribosomal_uL1-like"/>
</dbReference>
<dbReference type="InterPro" id="IPR028364">
    <property type="entry name" value="Ribosomal_uL1/biogenesis"/>
</dbReference>
<dbReference type="InterPro" id="IPR016095">
    <property type="entry name" value="Ribosomal_uL1_3-a/b-sand"/>
</dbReference>
<dbReference type="InterPro" id="IPR023673">
    <property type="entry name" value="Ribosomal_uL1_CS"/>
</dbReference>
<dbReference type="NCBIfam" id="TIGR01169">
    <property type="entry name" value="rplA_bact"/>
    <property type="match status" value="1"/>
</dbReference>
<dbReference type="PANTHER" id="PTHR36427">
    <property type="entry name" value="54S RIBOSOMAL PROTEIN L1, MITOCHONDRIAL"/>
    <property type="match status" value="1"/>
</dbReference>
<dbReference type="PANTHER" id="PTHR36427:SF3">
    <property type="entry name" value="LARGE RIBOSOMAL SUBUNIT PROTEIN UL1M"/>
    <property type="match status" value="1"/>
</dbReference>
<dbReference type="Pfam" id="PF00687">
    <property type="entry name" value="Ribosomal_L1"/>
    <property type="match status" value="1"/>
</dbReference>
<dbReference type="PIRSF" id="PIRSF002155">
    <property type="entry name" value="Ribosomal_L1"/>
    <property type="match status" value="1"/>
</dbReference>
<dbReference type="SUPFAM" id="SSF56808">
    <property type="entry name" value="Ribosomal protein L1"/>
    <property type="match status" value="1"/>
</dbReference>
<dbReference type="PROSITE" id="PS01199">
    <property type="entry name" value="RIBOSOMAL_L1"/>
    <property type="match status" value="1"/>
</dbReference>
<sequence>MSKLTKKQKKIAEVIKPNQLYTVADAVAILKQFASKKFRESLDISINLGVDPRKSDQVVRSSTNLPKGTGKTVRVAVFAQGDNAAKATAAGADIVGFEDLADKIKAGEMNFDVVIATPDAMRIVGQLGQILGPRGLMPNPKVGTVTTNVEAAVNDAKSGQVRYRTDKNGIIHCTVGKADFAPEDVLENVVALINDLKKAKPASSKGQYLKKISLSTTMGPGLPIDISSIPV</sequence>
<proteinExistence type="inferred from homology"/>
<accession>Q5X869</accession>
<organism>
    <name type="scientific">Legionella pneumophila (strain Paris)</name>
    <dbReference type="NCBI Taxonomy" id="297246"/>
    <lineage>
        <taxon>Bacteria</taxon>
        <taxon>Pseudomonadati</taxon>
        <taxon>Pseudomonadota</taxon>
        <taxon>Gammaproteobacteria</taxon>
        <taxon>Legionellales</taxon>
        <taxon>Legionellaceae</taxon>
        <taxon>Legionella</taxon>
    </lineage>
</organism>
<evidence type="ECO:0000255" key="1">
    <source>
        <dbReference type="HAMAP-Rule" id="MF_01318"/>
    </source>
</evidence>
<evidence type="ECO:0000305" key="2"/>
<reference key="1">
    <citation type="journal article" date="2004" name="Nat. Genet.">
        <title>Evidence in the Legionella pneumophila genome for exploitation of host cell functions and high genome plasticity.</title>
        <authorList>
            <person name="Cazalet C."/>
            <person name="Rusniok C."/>
            <person name="Brueggemann H."/>
            <person name="Zidane N."/>
            <person name="Magnier A."/>
            <person name="Ma L."/>
            <person name="Tichit M."/>
            <person name="Jarraud S."/>
            <person name="Bouchier C."/>
            <person name="Vandenesch F."/>
            <person name="Kunst F."/>
            <person name="Etienne J."/>
            <person name="Glaser P."/>
            <person name="Buchrieser C."/>
        </authorList>
    </citation>
    <scope>NUCLEOTIDE SEQUENCE [LARGE SCALE GENOMIC DNA]</scope>
    <source>
        <strain>Paris</strain>
    </source>
</reference>
<name>RL1_LEGPA</name>
<gene>
    <name evidence="1" type="primary">rplA</name>
    <name type="ordered locus">lpp0384</name>
</gene>
<feature type="chain" id="PRO_0000125673" description="Large ribosomal subunit protein uL1">
    <location>
        <begin position="1"/>
        <end position="231"/>
    </location>
</feature>
<comment type="function">
    <text evidence="1">Binds directly to 23S rRNA. The L1 stalk is quite mobile in the ribosome, and is involved in E site tRNA release.</text>
</comment>
<comment type="function">
    <text evidence="1">Protein L1 is also a translational repressor protein, it controls the translation of the L11 operon by binding to its mRNA.</text>
</comment>
<comment type="subunit">
    <text evidence="1">Part of the 50S ribosomal subunit.</text>
</comment>
<comment type="similarity">
    <text evidence="1">Belongs to the universal ribosomal protein uL1 family.</text>
</comment>